<gene>
    <name evidence="1" type="primary">prmC</name>
    <name type="synonym">hemK</name>
    <name type="ordered locus">aq_099</name>
</gene>
<feature type="chain" id="PRO_0000157159" description="Release factor glutamine methyltransferase">
    <location>
        <begin position="1"/>
        <end position="281"/>
    </location>
</feature>
<feature type="binding site" evidence="1">
    <location>
        <begin position="121"/>
        <end position="125"/>
    </location>
    <ligand>
        <name>S-adenosyl-L-methionine</name>
        <dbReference type="ChEBI" id="CHEBI:59789"/>
    </ligand>
</feature>
<feature type="binding site" evidence="1">
    <location>
        <position position="144"/>
    </location>
    <ligand>
        <name>S-adenosyl-L-methionine</name>
        <dbReference type="ChEBI" id="CHEBI:59789"/>
    </ligand>
</feature>
<feature type="binding site" evidence="1">
    <location>
        <begin position="188"/>
        <end position="191"/>
    </location>
    <ligand>
        <name>substrate</name>
    </ligand>
</feature>
<feature type="binding site" evidence="1">
    <location>
        <position position="188"/>
    </location>
    <ligand>
        <name>S-adenosyl-L-methionine</name>
        <dbReference type="ChEBI" id="CHEBI:59789"/>
    </ligand>
</feature>
<dbReference type="EC" id="2.1.1.297" evidence="1"/>
<dbReference type="EMBL" id="AE000657">
    <property type="protein sequence ID" value="AAC06458.1"/>
    <property type="molecule type" value="Genomic_DNA"/>
</dbReference>
<dbReference type="PIR" id="G70309">
    <property type="entry name" value="G70309"/>
</dbReference>
<dbReference type="RefSeq" id="NP_213065.1">
    <property type="nucleotide sequence ID" value="NC_000918.1"/>
</dbReference>
<dbReference type="SMR" id="O66506"/>
<dbReference type="FunCoup" id="O66506">
    <property type="interactions" value="385"/>
</dbReference>
<dbReference type="STRING" id="224324.aq_099"/>
<dbReference type="EnsemblBacteria" id="AAC06458">
    <property type="protein sequence ID" value="AAC06458"/>
    <property type="gene ID" value="aq_099"/>
</dbReference>
<dbReference type="KEGG" id="aae:aq_099"/>
<dbReference type="PATRIC" id="fig|224324.8.peg.85"/>
<dbReference type="eggNOG" id="COG2890">
    <property type="taxonomic scope" value="Bacteria"/>
</dbReference>
<dbReference type="HOGENOM" id="CLU_018398_3_1_0"/>
<dbReference type="InParanoid" id="O66506"/>
<dbReference type="OrthoDB" id="9784805at2"/>
<dbReference type="Proteomes" id="UP000000798">
    <property type="component" value="Chromosome"/>
</dbReference>
<dbReference type="GO" id="GO:0003676">
    <property type="term" value="F:nucleic acid binding"/>
    <property type="evidence" value="ECO:0007669"/>
    <property type="project" value="InterPro"/>
</dbReference>
<dbReference type="GO" id="GO:0102559">
    <property type="term" value="F:protein-(glutamine-N5) methyltransferase activity"/>
    <property type="evidence" value="ECO:0007669"/>
    <property type="project" value="UniProtKB-EC"/>
</dbReference>
<dbReference type="GO" id="GO:0036009">
    <property type="term" value="F:protein-glutamine N-methyltransferase activity"/>
    <property type="evidence" value="ECO:0000318"/>
    <property type="project" value="GO_Central"/>
</dbReference>
<dbReference type="GO" id="GO:0032259">
    <property type="term" value="P:methylation"/>
    <property type="evidence" value="ECO:0007669"/>
    <property type="project" value="UniProtKB-KW"/>
</dbReference>
<dbReference type="GO" id="GO:0006415">
    <property type="term" value="P:translational termination"/>
    <property type="evidence" value="ECO:0000318"/>
    <property type="project" value="GO_Central"/>
</dbReference>
<dbReference type="CDD" id="cd02440">
    <property type="entry name" value="AdoMet_MTases"/>
    <property type="match status" value="1"/>
</dbReference>
<dbReference type="Gene3D" id="1.10.8.10">
    <property type="entry name" value="DNA helicase RuvA subunit, C-terminal domain"/>
    <property type="match status" value="1"/>
</dbReference>
<dbReference type="Gene3D" id="3.40.50.150">
    <property type="entry name" value="Vaccinia Virus protein VP39"/>
    <property type="match status" value="1"/>
</dbReference>
<dbReference type="HAMAP" id="MF_02126">
    <property type="entry name" value="RF_methyltr_PrmC"/>
    <property type="match status" value="1"/>
</dbReference>
<dbReference type="InterPro" id="IPR002052">
    <property type="entry name" value="DNA_methylase_N6_adenine_CS"/>
</dbReference>
<dbReference type="InterPro" id="IPR004556">
    <property type="entry name" value="HemK-like"/>
</dbReference>
<dbReference type="InterPro" id="IPR050320">
    <property type="entry name" value="N5-glutamine_MTase"/>
</dbReference>
<dbReference type="InterPro" id="IPR040758">
    <property type="entry name" value="PrmC_N"/>
</dbReference>
<dbReference type="InterPro" id="IPR019874">
    <property type="entry name" value="RF_methyltr_PrmC"/>
</dbReference>
<dbReference type="InterPro" id="IPR029063">
    <property type="entry name" value="SAM-dependent_MTases_sf"/>
</dbReference>
<dbReference type="InterPro" id="IPR007848">
    <property type="entry name" value="Small_mtfrase_dom"/>
</dbReference>
<dbReference type="NCBIfam" id="TIGR00536">
    <property type="entry name" value="hemK_fam"/>
    <property type="match status" value="1"/>
</dbReference>
<dbReference type="NCBIfam" id="TIGR03534">
    <property type="entry name" value="RF_mod_PrmC"/>
    <property type="match status" value="1"/>
</dbReference>
<dbReference type="PANTHER" id="PTHR18895">
    <property type="entry name" value="HEMK METHYLTRANSFERASE"/>
    <property type="match status" value="1"/>
</dbReference>
<dbReference type="PANTHER" id="PTHR18895:SF74">
    <property type="entry name" value="MTRF1L RELEASE FACTOR GLUTAMINE METHYLTRANSFERASE"/>
    <property type="match status" value="1"/>
</dbReference>
<dbReference type="Pfam" id="PF05175">
    <property type="entry name" value="MTS"/>
    <property type="match status" value="1"/>
</dbReference>
<dbReference type="Pfam" id="PF17827">
    <property type="entry name" value="PrmC_N"/>
    <property type="match status" value="1"/>
</dbReference>
<dbReference type="SUPFAM" id="SSF53335">
    <property type="entry name" value="S-adenosyl-L-methionine-dependent methyltransferases"/>
    <property type="match status" value="1"/>
</dbReference>
<proteinExistence type="inferred from homology"/>
<keyword id="KW-0489">Methyltransferase</keyword>
<keyword id="KW-1185">Reference proteome</keyword>
<keyword id="KW-0949">S-adenosyl-L-methionine</keyword>
<keyword id="KW-0808">Transferase</keyword>
<comment type="function">
    <text evidence="1">Methylates the class 1 translation termination release factors RF1/PrfA and RF2/PrfB on the glutamine residue of the universally conserved GGQ motif.</text>
</comment>
<comment type="catalytic activity">
    <reaction evidence="1">
        <text>L-glutaminyl-[peptide chain release factor] + S-adenosyl-L-methionine = N(5)-methyl-L-glutaminyl-[peptide chain release factor] + S-adenosyl-L-homocysteine + H(+)</text>
        <dbReference type="Rhea" id="RHEA:42896"/>
        <dbReference type="Rhea" id="RHEA-COMP:10271"/>
        <dbReference type="Rhea" id="RHEA-COMP:10272"/>
        <dbReference type="ChEBI" id="CHEBI:15378"/>
        <dbReference type="ChEBI" id="CHEBI:30011"/>
        <dbReference type="ChEBI" id="CHEBI:57856"/>
        <dbReference type="ChEBI" id="CHEBI:59789"/>
        <dbReference type="ChEBI" id="CHEBI:61891"/>
        <dbReference type="EC" id="2.1.1.297"/>
    </reaction>
</comment>
<comment type="similarity">
    <text evidence="1">Belongs to the protein N5-glutamine methyltransferase family. PrmC subfamily.</text>
</comment>
<accession>O66506</accession>
<organism>
    <name type="scientific">Aquifex aeolicus (strain VF5)</name>
    <dbReference type="NCBI Taxonomy" id="224324"/>
    <lineage>
        <taxon>Bacteria</taxon>
        <taxon>Pseudomonadati</taxon>
        <taxon>Aquificota</taxon>
        <taxon>Aquificia</taxon>
        <taxon>Aquificales</taxon>
        <taxon>Aquificaceae</taxon>
        <taxon>Aquifex</taxon>
    </lineage>
</organism>
<name>PRMC_AQUAE</name>
<sequence length="281" mass="32577">MRKVFKLNKVKVKELLKKVESEYRRDAEIILSYLLKVSPSQIPLMYAREIPEEIVKRFFKQMKERKKGIPTAYVIGEWECMGRVFKVKKGVLVPRPETEILIERTLELIPQDREMVGFELGSGTGCISINLLIERPKLVMYATDVNPDAVELTKENAKLHKVDDRLFVFLGNAFEPVKGMKFDFIVSNPPYIPENFWEILPEEVKKEGYTSLIGGKKGWEFYELIAEEGTKHLKENGFIALEIGHDQGKVVKELLEKKCFKVNIFKDYAGFDRVVIAQRWS</sequence>
<reference key="1">
    <citation type="journal article" date="1998" name="Nature">
        <title>The complete genome of the hyperthermophilic bacterium Aquifex aeolicus.</title>
        <authorList>
            <person name="Deckert G."/>
            <person name="Warren P.V."/>
            <person name="Gaasterland T."/>
            <person name="Young W.G."/>
            <person name="Lenox A.L."/>
            <person name="Graham D.E."/>
            <person name="Overbeek R."/>
            <person name="Snead M.A."/>
            <person name="Keller M."/>
            <person name="Aujay M."/>
            <person name="Huber R."/>
            <person name="Feldman R.A."/>
            <person name="Short J.M."/>
            <person name="Olsen G.J."/>
            <person name="Swanson R.V."/>
        </authorList>
    </citation>
    <scope>NUCLEOTIDE SEQUENCE [LARGE SCALE GENOMIC DNA]</scope>
    <source>
        <strain>VF5</strain>
    </source>
</reference>
<evidence type="ECO:0000255" key="1">
    <source>
        <dbReference type="HAMAP-Rule" id="MF_02126"/>
    </source>
</evidence>
<protein>
    <recommendedName>
        <fullName evidence="1">Release factor glutamine methyltransferase</fullName>
        <shortName evidence="1">RF MTase</shortName>
        <ecNumber evidence="1">2.1.1.297</ecNumber>
    </recommendedName>
    <alternativeName>
        <fullName>M.AaoHemKP</fullName>
    </alternativeName>
    <alternativeName>
        <fullName evidence="1">N5-glutamine methyltransferase PrmC</fullName>
    </alternativeName>
    <alternativeName>
        <fullName evidence="1">Protein-(glutamine-N5) MTase PrmC</fullName>
    </alternativeName>
    <alternativeName>
        <fullName evidence="1">Protein-glutamine N-methyltransferase PrmC</fullName>
    </alternativeName>
</protein>